<organism>
    <name type="scientific">Danio rerio</name>
    <name type="common">Zebrafish</name>
    <name type="synonym">Brachydanio rerio</name>
    <dbReference type="NCBI Taxonomy" id="7955"/>
    <lineage>
        <taxon>Eukaryota</taxon>
        <taxon>Metazoa</taxon>
        <taxon>Chordata</taxon>
        <taxon>Craniata</taxon>
        <taxon>Vertebrata</taxon>
        <taxon>Euteleostomi</taxon>
        <taxon>Actinopterygii</taxon>
        <taxon>Neopterygii</taxon>
        <taxon>Teleostei</taxon>
        <taxon>Ostariophysi</taxon>
        <taxon>Cypriniformes</taxon>
        <taxon>Danionidae</taxon>
        <taxon>Danioninae</taxon>
        <taxon>Danio</taxon>
    </lineage>
</organism>
<dbReference type="EMBL" id="BC162114">
    <property type="protein sequence ID" value="AAI62114.1"/>
    <property type="status" value="ALT_INIT"/>
    <property type="molecule type" value="mRNA"/>
</dbReference>
<dbReference type="RefSeq" id="NP_001189365.1">
    <property type="nucleotide sequence ID" value="NM_001202436.2"/>
</dbReference>
<dbReference type="SMR" id="B3DFP2"/>
<dbReference type="FunCoup" id="B3DFP2">
    <property type="interactions" value="653"/>
</dbReference>
<dbReference type="STRING" id="7955.ENSDARP00000114572"/>
<dbReference type="PeptideAtlas" id="B3DFP2"/>
<dbReference type="Ensembl" id="ENSDART00000132352">
    <property type="protein sequence ID" value="ENSDARP00000114572"/>
    <property type="gene ID" value="ENSDARG00000093382"/>
</dbReference>
<dbReference type="GeneID" id="558925"/>
<dbReference type="KEGG" id="dre:558925"/>
<dbReference type="AGR" id="ZFIN:ZDB-GENE-030131-8451"/>
<dbReference type="CTD" id="790955"/>
<dbReference type="ZFIN" id="ZDB-GENE-030131-8451">
    <property type="gene designation" value="uqcc3"/>
</dbReference>
<dbReference type="HOGENOM" id="CLU_184624_0_0_1"/>
<dbReference type="InParanoid" id="B3DFP2"/>
<dbReference type="OrthoDB" id="9884264at2759"/>
<dbReference type="PhylomeDB" id="B3DFP2"/>
<dbReference type="PRO" id="PR:B3DFP2"/>
<dbReference type="Proteomes" id="UP000000437">
    <property type="component" value="Alternate scaffold 10"/>
</dbReference>
<dbReference type="Proteomes" id="UP000000437">
    <property type="component" value="Chromosome 10"/>
</dbReference>
<dbReference type="Bgee" id="ENSDARG00000093382">
    <property type="expression patterns" value="Expressed in mature ovarian follicle and 27 other cell types or tissues"/>
</dbReference>
<dbReference type="ExpressionAtlas" id="B3DFP2">
    <property type="expression patterns" value="baseline and differential"/>
</dbReference>
<dbReference type="GO" id="GO:0005743">
    <property type="term" value="C:mitochondrial inner membrane"/>
    <property type="evidence" value="ECO:0000250"/>
    <property type="project" value="UniProtKB"/>
</dbReference>
<dbReference type="GO" id="GO:1901612">
    <property type="term" value="F:cardiolipin binding"/>
    <property type="evidence" value="ECO:0000250"/>
    <property type="project" value="UniProtKB"/>
</dbReference>
<dbReference type="GO" id="GO:0070300">
    <property type="term" value="F:phosphatidic acid binding"/>
    <property type="evidence" value="ECO:0000250"/>
    <property type="project" value="UniProtKB"/>
</dbReference>
<dbReference type="GO" id="GO:0006754">
    <property type="term" value="P:ATP biosynthetic process"/>
    <property type="evidence" value="ECO:0007669"/>
    <property type="project" value="UniProtKB-KW"/>
</dbReference>
<dbReference type="GO" id="GO:0042407">
    <property type="term" value="P:cristae formation"/>
    <property type="evidence" value="ECO:0000250"/>
    <property type="project" value="UniProtKB"/>
</dbReference>
<dbReference type="GO" id="GO:0006122">
    <property type="term" value="P:mitochondrial electron transport, ubiquinol to cytochrome c"/>
    <property type="evidence" value="ECO:0000250"/>
    <property type="project" value="UniProtKB"/>
</dbReference>
<dbReference type="GO" id="GO:0034551">
    <property type="term" value="P:mitochondrial respiratory chain complex III assembly"/>
    <property type="evidence" value="ECO:0000250"/>
    <property type="project" value="UniProtKB"/>
</dbReference>
<dbReference type="InterPro" id="IPR027896">
    <property type="entry name" value="UQCC3"/>
</dbReference>
<dbReference type="PANTHER" id="PTHR36465">
    <property type="entry name" value="UBIQUINOL-CYTOCHROME-C REDUCTASE COMPLEX ASSEMBLY FACTOR 3"/>
    <property type="match status" value="1"/>
</dbReference>
<dbReference type="PANTHER" id="PTHR36465:SF1">
    <property type="entry name" value="UBIQUINOL-CYTOCHROME-C REDUCTASE COMPLEX ASSEMBLY FACTOR 3"/>
    <property type="match status" value="1"/>
</dbReference>
<dbReference type="Pfam" id="PF15141">
    <property type="entry name" value="UQCC3"/>
    <property type="match status" value="1"/>
</dbReference>
<name>UQCC3_DANRE</name>
<keyword id="KW-0066">ATP synthesis</keyword>
<keyword id="KW-0472">Membrane</keyword>
<keyword id="KW-0496">Mitochondrion</keyword>
<keyword id="KW-0999">Mitochondrion inner membrane</keyword>
<keyword id="KW-1185">Reference proteome</keyword>
<keyword id="KW-0812">Transmembrane</keyword>
<keyword id="KW-1133">Transmembrane helix</keyword>
<gene>
    <name evidence="1" type="primary">uqcc3</name>
    <name type="ORF">si:dkey-88p24.9</name>
</gene>
<sequence length="78" mass="8649">MSGMRILTGSVALGGLTYAIWIIFSPGEERKKEILKSLPEANPVRMEETRKRNAIMLQVLKDAAETNDNIARGFGSQK</sequence>
<evidence type="ECO:0000250" key="1">
    <source>
        <dbReference type="UniProtKB" id="Q6UW78"/>
    </source>
</evidence>
<evidence type="ECO:0000255" key="2"/>
<evidence type="ECO:0000305" key="3"/>
<reference key="1">
    <citation type="submission" date="2008-04" db="EMBL/GenBank/DDBJ databases">
        <authorList>
            <consortium name="NIH - Zebrafish Gene Collection (ZGC) project"/>
        </authorList>
    </citation>
    <scope>NUCLEOTIDE SEQUENCE [LARGE SCALE MRNA]</scope>
</reference>
<accession>B3DFP2</accession>
<comment type="function">
    <text evidence="1">Required for the assembly of the ubiquinol-cytochrome c reductase complex (mitochondrial respiratory chain complex III or cytochrome b-c1 complex), mediating cytochrome b recruitment and probably stabilization within the complex. Thereby, plays an important role in ATP production by mitochondria. Cardiolipin-binding protein, it may also control the cardiolipin composition of mitochondria membranes and their morphology.</text>
</comment>
<comment type="subunit">
    <text evidence="1">Associates with the ubiquinol-cytochrome c reductase complex (mitochondrial respiratory chain complex III or cytochrome b-c1 complex).</text>
</comment>
<comment type="subcellular location">
    <subcellularLocation>
        <location evidence="1">Mitochondrion inner membrane</location>
        <topology evidence="2">Single-pass membrane protein</topology>
    </subcellularLocation>
</comment>
<comment type="similarity">
    <text evidence="3">Belongs to the UQCC3 family.</text>
</comment>
<comment type="sequence caution" evidence="3">
    <conflict type="erroneous initiation">
        <sequence resource="EMBL-CDS" id="AAI62114"/>
    </conflict>
</comment>
<comment type="sequence caution" evidence="3">
    <conflict type="erroneous initiation">
        <sequence resource="EMBL-CDS" id="AAI62114"/>
    </conflict>
    <text>Truncated N-terminus.</text>
</comment>
<feature type="chain" id="PRO_0000360985" description="Ubiquinol-cytochrome-c reductase complex assembly factor 3">
    <location>
        <begin position="1"/>
        <end position="78"/>
    </location>
</feature>
<feature type="topological domain" description="Mitochondrial matrix" evidence="1">
    <location>
        <begin position="1"/>
        <end position="5"/>
    </location>
</feature>
<feature type="transmembrane region" description="Helical" evidence="2">
    <location>
        <begin position="6"/>
        <end position="26"/>
    </location>
</feature>
<feature type="topological domain" description="Mitochondrial intermembrane" evidence="1">
    <location>
        <begin position="27"/>
        <end position="78"/>
    </location>
</feature>
<proteinExistence type="inferred from homology"/>
<protein>
    <recommendedName>
        <fullName evidence="1">Ubiquinol-cytochrome-c reductase complex assembly factor 3</fullName>
    </recommendedName>
</protein>